<feature type="signal peptide" evidence="1">
    <location>
        <begin position="1"/>
        <end position="22"/>
    </location>
</feature>
<feature type="propeptide" id="PRO_0000372701" evidence="3">
    <location>
        <begin position="23"/>
        <end position="44"/>
    </location>
</feature>
<feature type="peptide" id="PRO_0000372702" description="Phylloseptin-Az2" evidence="3">
    <location>
        <begin position="47"/>
        <end position="65"/>
    </location>
</feature>
<feature type="region of interest" description="Disordered" evidence="2">
    <location>
        <begin position="24"/>
        <end position="45"/>
    </location>
</feature>
<feature type="compositionally biased region" description="Acidic residues" evidence="2">
    <location>
        <begin position="31"/>
        <end position="41"/>
    </location>
</feature>
<feature type="modified residue" description="Phenylalanine amide" evidence="3">
    <location>
        <position position="65"/>
    </location>
</feature>
<dbReference type="GO" id="GO:0005576">
    <property type="term" value="C:extracellular region"/>
    <property type="evidence" value="ECO:0007669"/>
    <property type="project" value="UniProtKB-SubCell"/>
</dbReference>
<dbReference type="GO" id="GO:0042742">
    <property type="term" value="P:defense response to bacterium"/>
    <property type="evidence" value="ECO:0007669"/>
    <property type="project" value="UniProtKB-KW"/>
</dbReference>
<dbReference type="InterPro" id="IPR004275">
    <property type="entry name" value="Frog_antimicrobial_propeptide"/>
</dbReference>
<dbReference type="InterPro" id="IPR016322">
    <property type="entry name" value="FSAP"/>
</dbReference>
<dbReference type="Pfam" id="PF03032">
    <property type="entry name" value="FSAP_sig_propep"/>
    <property type="match status" value="1"/>
</dbReference>
<dbReference type="PIRSF" id="PIRSF001822">
    <property type="entry name" value="Dermaseptin_precursor"/>
    <property type="match status" value="1"/>
</dbReference>
<reference evidence="5" key="1">
    <citation type="journal article" date="2007" name="Peptides">
        <title>A combined mass spectrometric and cDNA sequencing approach to the isolation and characterization of novel antimicrobial peptides from the skin secretions of Phyllomedusa hypochondrialis azurea.</title>
        <authorList>
            <person name="Thompson A.H."/>
            <person name="Bjourson A.J."/>
            <person name="Orr D.F."/>
            <person name="Shaw C."/>
            <person name="McClean S."/>
        </authorList>
    </citation>
    <scope>NUCLEOTIDE SEQUENCE [MRNA]</scope>
    <scope>PROTEIN SEQUENCE OF 47-65</scope>
    <scope>FUNCTION</scope>
    <scope>SUBCELLULAR LOCATION</scope>
    <scope>TISSUE SPECIFICITY</scope>
    <scope>MASS SPECTROMETRY</scope>
    <scope>AMIDATION AT PHE-65</scope>
    <source>
        <tissue evidence="3">Skin secretion</tissue>
    </source>
</reference>
<comment type="function">
    <text evidence="3">Has antibacterial activity against the Gram-negative bacteria E.coli ATCC 11775 (MIC=7.2 uM), and the Gram-positive bacteria S.aureus ATCC 12600 (MIC=3.6 uM) and M.luteus ATCC 49732 (MIC=1.8 uM). Does not inhibit the growth of the fungus C.albicans.</text>
</comment>
<comment type="subcellular location">
    <subcellularLocation>
        <location evidence="3">Secreted</location>
    </subcellularLocation>
</comment>
<comment type="tissue specificity">
    <text evidence="3">Expressed by the skin glands.</text>
</comment>
<comment type="mass spectrometry"/>
<comment type="similarity">
    <text evidence="1">Belongs to the frog skin active peptide (FSAP) family. Phylloseptin subfamily.</text>
</comment>
<protein>
    <recommendedName>
        <fullName evidence="5">Phylloseptin-Az2</fullName>
        <shortName evidence="5">PLS-Az2</shortName>
    </recommendedName>
    <alternativeName>
        <fullName evidence="4">Phylloseptin-7</fullName>
        <shortName evidence="4">PS-7</shortName>
    </alternativeName>
</protein>
<organism>
    <name type="scientific">Pithecopus azureus</name>
    <name type="common">Orange-legged monkey tree frog</name>
    <name type="synonym">Phyllomedusa azurea</name>
    <dbReference type="NCBI Taxonomy" id="2034991"/>
    <lineage>
        <taxon>Eukaryota</taxon>
        <taxon>Metazoa</taxon>
        <taxon>Chordata</taxon>
        <taxon>Craniata</taxon>
        <taxon>Vertebrata</taxon>
        <taxon>Euteleostomi</taxon>
        <taxon>Amphibia</taxon>
        <taxon>Batrachia</taxon>
        <taxon>Anura</taxon>
        <taxon>Neobatrachia</taxon>
        <taxon>Hyloidea</taxon>
        <taxon>Hylidae</taxon>
        <taxon>Phyllomedusinae</taxon>
        <taxon>Pithecopus</taxon>
    </lineage>
</organism>
<name>PLS2_PITAZ</name>
<sequence>MAFLKKSLFLVLFLGLVSLSICEEEKRETEEKENEQEDDDKSEEKRFLSLIPHAINAVSAIAKHFG</sequence>
<keyword id="KW-0027">Amidation</keyword>
<keyword id="KW-0878">Amphibian defense peptide</keyword>
<keyword id="KW-0044">Antibiotic</keyword>
<keyword id="KW-0929">Antimicrobial</keyword>
<keyword id="KW-0165">Cleavage on pair of basic residues</keyword>
<keyword id="KW-0903">Direct protein sequencing</keyword>
<keyword id="KW-0964">Secreted</keyword>
<keyword id="KW-0732">Signal</keyword>
<evidence type="ECO:0000255" key="1"/>
<evidence type="ECO:0000256" key="2">
    <source>
        <dbReference type="SAM" id="MobiDB-lite"/>
    </source>
</evidence>
<evidence type="ECO:0000269" key="3">
    <source>
    </source>
</evidence>
<evidence type="ECO:0000303" key="4">
    <source>
    </source>
</evidence>
<evidence type="ECO:0000305" key="5"/>
<accession>P85882</accession>
<proteinExistence type="evidence at protein level"/>